<organism>
    <name type="scientific">Sinorhizobium fredii (strain NBRC 101917 / NGR234)</name>
    <dbReference type="NCBI Taxonomy" id="394"/>
    <lineage>
        <taxon>Bacteria</taxon>
        <taxon>Pseudomonadati</taxon>
        <taxon>Pseudomonadota</taxon>
        <taxon>Alphaproteobacteria</taxon>
        <taxon>Hyphomicrobiales</taxon>
        <taxon>Rhizobiaceae</taxon>
        <taxon>Sinorhizobium/Ensifer group</taxon>
        <taxon>Sinorhizobium</taxon>
    </lineage>
</organism>
<geneLocation type="plasmid">
    <name>sym pNGR234a</name>
</geneLocation>
<feature type="chain" id="PRO_0000200965" description="Putative exopolysaccharide production repressor protein y4xQ">
    <location>
        <begin position="1"/>
        <end position="100"/>
    </location>
</feature>
<feature type="transmembrane region" description="Helical" evidence="1">
    <location>
        <begin position="9"/>
        <end position="29"/>
    </location>
</feature>
<feature type="transmembrane region" description="Helical" evidence="1">
    <location>
        <begin position="35"/>
        <end position="55"/>
    </location>
</feature>
<feature type="region of interest" description="Disordered" evidence="2">
    <location>
        <begin position="66"/>
        <end position="100"/>
    </location>
</feature>
<gene>
    <name type="ordered locus">NGR_a00830</name>
    <name type="ORF">y4xQ</name>
</gene>
<reference key="1">
    <citation type="journal article" date="1997" name="Nature">
        <title>Molecular basis of symbiosis between Rhizobium and legumes.</title>
        <authorList>
            <person name="Freiberg C.A."/>
            <person name="Fellay R."/>
            <person name="Bairoch A."/>
            <person name="Broughton W.J."/>
            <person name="Rosenthal A."/>
            <person name="Perret X."/>
        </authorList>
    </citation>
    <scope>NUCLEOTIDE SEQUENCE [LARGE SCALE GENOMIC DNA]</scope>
    <source>
        <strain>NBRC 101917 / NGR234</strain>
    </source>
</reference>
<reference key="2">
    <citation type="journal article" date="2009" name="Appl. Environ. Microbiol.">
        <title>Rhizobium sp. strain NGR234 possesses a remarkable number of secretion systems.</title>
        <authorList>
            <person name="Schmeisser C."/>
            <person name="Liesegang H."/>
            <person name="Krysciak D."/>
            <person name="Bakkou N."/>
            <person name="Le Quere A."/>
            <person name="Wollherr A."/>
            <person name="Heinemeyer I."/>
            <person name="Morgenstern B."/>
            <person name="Pommerening-Roeser A."/>
            <person name="Flores M."/>
            <person name="Palacios R."/>
            <person name="Brenner S."/>
            <person name="Gottschalk G."/>
            <person name="Schmitz R.A."/>
            <person name="Broughton W.J."/>
            <person name="Perret X."/>
            <person name="Strittmatter A.W."/>
            <person name="Streit W.R."/>
        </authorList>
    </citation>
    <scope>NUCLEOTIDE SEQUENCE [LARGE SCALE GENOMIC DNA]</scope>
    <source>
        <strain>NBRC 101917 / NGR234</strain>
    </source>
</reference>
<protein>
    <recommendedName>
        <fullName>Putative exopolysaccharide production repressor protein y4xQ</fullName>
    </recommendedName>
</protein>
<proteinExistence type="predicted"/>
<sequence>MSFGIFHRILWLFLCANTLIVYLVTGSISDAVVTTMVGSLLLQLTYFANVLFLLWRAHCARRARQTTGQFHGEEQPGDPRIAGTHGRTDGDPCFEDEDSR</sequence>
<keyword id="KW-1003">Cell membrane</keyword>
<keyword id="KW-0472">Membrane</keyword>
<keyword id="KW-0536">Nodulation</keyword>
<keyword id="KW-0614">Plasmid</keyword>
<keyword id="KW-1185">Reference proteome</keyword>
<keyword id="KW-0812">Transmembrane</keyword>
<keyword id="KW-1133">Transmembrane helix</keyword>
<comment type="function">
    <text>Could be involved in the inhibition of exopolysaccharide synthesis (EPS) and nodulation ability (nod).</text>
</comment>
<comment type="subcellular location">
    <subcellularLocation>
        <location evidence="3">Cell membrane</location>
        <topology evidence="3">Multi-pass membrane protein</topology>
    </subcellularLocation>
</comment>
<comment type="similarity">
    <text evidence="3">To Rhizobium exopolysaccharide production repressor protein (ExoX).</text>
</comment>
<name>Y4XQ_SINFN</name>
<evidence type="ECO:0000255" key="1"/>
<evidence type="ECO:0000256" key="2">
    <source>
        <dbReference type="SAM" id="MobiDB-lite"/>
    </source>
</evidence>
<evidence type="ECO:0000305" key="3"/>
<dbReference type="EMBL" id="U00090">
    <property type="protein sequence ID" value="AAB91929.1"/>
    <property type="molecule type" value="Genomic_DNA"/>
</dbReference>
<dbReference type="RefSeq" id="NP_444142.1">
    <property type="nucleotide sequence ID" value="NC_000914.2"/>
</dbReference>
<dbReference type="RefSeq" id="WP_010875124.1">
    <property type="nucleotide sequence ID" value="NC_000914.2"/>
</dbReference>
<dbReference type="KEGG" id="rhi:NGR_a00830"/>
<dbReference type="eggNOG" id="ENOG502ZJIS">
    <property type="taxonomic scope" value="Bacteria"/>
</dbReference>
<dbReference type="HOGENOM" id="CLU_2303775_0_0_5"/>
<dbReference type="OrthoDB" id="9802759at2"/>
<dbReference type="Proteomes" id="UP000001054">
    <property type="component" value="Plasmid pNGR234a"/>
</dbReference>
<dbReference type="GO" id="GO:0005886">
    <property type="term" value="C:plasma membrane"/>
    <property type="evidence" value="ECO:0007669"/>
    <property type="project" value="UniProtKB-SubCell"/>
</dbReference>
<dbReference type="InterPro" id="IPR024239">
    <property type="entry name" value="SyrA"/>
</dbReference>
<dbReference type="Pfam" id="PF11089">
    <property type="entry name" value="SyrA"/>
    <property type="match status" value="1"/>
</dbReference>
<accession>P55698</accession>